<keyword id="KW-0052">Apoplast</keyword>
<keyword id="KW-0134">Cell wall</keyword>
<keyword id="KW-1015">Disulfide bond</keyword>
<keyword id="KW-0325">Glycoprotein</keyword>
<keyword id="KW-0464">Manganese</keyword>
<keyword id="KW-0479">Metal-binding</keyword>
<keyword id="KW-0560">Oxidoreductase</keyword>
<keyword id="KW-0964">Secreted</keyword>
<keyword id="KW-0732">Signal</keyword>
<keyword id="KW-0346">Stress response</keyword>
<reference key="1">
    <citation type="journal article" date="1994" name="Plant Physiol.">
        <title>Nucleotide sequence of a transcript encoding a germin-like protein that is present in salt-stressed barley (Hordeum vulgare L.) roots.</title>
        <authorList>
            <person name="Hurkman W.J."/>
            <person name="Lane B.G."/>
            <person name="Tanaka C.K."/>
        </authorList>
    </citation>
    <scope>NUCLEOTIDE SEQUENCE [MRNA]</scope>
    <source>
        <strain>cv. CM 72</strain>
        <tissue>Root</tissue>
    </source>
</reference>
<dbReference type="EC" id="1.2.3.4"/>
<dbReference type="EMBL" id="U01963">
    <property type="protein sequence ID" value="AAA20245.1"/>
    <property type="molecule type" value="mRNA"/>
</dbReference>
<dbReference type="SMR" id="P45851"/>
<dbReference type="OMA" id="NGYPCQP"/>
<dbReference type="ExpressionAtlas" id="P45851">
    <property type="expression patterns" value="baseline and differential"/>
</dbReference>
<dbReference type="GO" id="GO:0048046">
    <property type="term" value="C:apoplast"/>
    <property type="evidence" value="ECO:0007669"/>
    <property type="project" value="UniProtKB-SubCell"/>
</dbReference>
<dbReference type="GO" id="GO:0030145">
    <property type="term" value="F:manganese ion binding"/>
    <property type="evidence" value="ECO:0007669"/>
    <property type="project" value="InterPro"/>
</dbReference>
<dbReference type="GO" id="GO:0050162">
    <property type="term" value="F:oxalate oxidase activity"/>
    <property type="evidence" value="ECO:0007669"/>
    <property type="project" value="UniProtKB-EC"/>
</dbReference>
<dbReference type="CDD" id="cd02241">
    <property type="entry name" value="cupin_OxOx"/>
    <property type="match status" value="1"/>
</dbReference>
<dbReference type="FunFam" id="2.60.120.10:FF:000005">
    <property type="entry name" value="Germin-like protein subfamily 1 member 8"/>
    <property type="match status" value="1"/>
</dbReference>
<dbReference type="Gene3D" id="2.60.120.10">
    <property type="entry name" value="Jelly Rolls"/>
    <property type="match status" value="1"/>
</dbReference>
<dbReference type="InterPro" id="IPR006045">
    <property type="entry name" value="Cupin_1"/>
</dbReference>
<dbReference type="InterPro" id="IPR001929">
    <property type="entry name" value="Germin"/>
</dbReference>
<dbReference type="InterPro" id="IPR019780">
    <property type="entry name" value="Germin_Mn-BS"/>
</dbReference>
<dbReference type="InterPro" id="IPR014710">
    <property type="entry name" value="RmlC-like_jellyroll"/>
</dbReference>
<dbReference type="InterPro" id="IPR011051">
    <property type="entry name" value="RmlC_Cupin_sf"/>
</dbReference>
<dbReference type="PANTHER" id="PTHR31238">
    <property type="entry name" value="GERMIN-LIKE PROTEIN SUBFAMILY 3 MEMBER 3"/>
    <property type="match status" value="1"/>
</dbReference>
<dbReference type="Pfam" id="PF00190">
    <property type="entry name" value="Cupin_1"/>
    <property type="match status" value="1"/>
</dbReference>
<dbReference type="PRINTS" id="PR00325">
    <property type="entry name" value="GERMIN"/>
</dbReference>
<dbReference type="SMART" id="SM00835">
    <property type="entry name" value="Cupin_1"/>
    <property type="match status" value="1"/>
</dbReference>
<dbReference type="SUPFAM" id="SSF51182">
    <property type="entry name" value="RmlC-like cupins"/>
    <property type="match status" value="1"/>
</dbReference>
<dbReference type="PROSITE" id="PS00725">
    <property type="entry name" value="GERMIN"/>
    <property type="match status" value="1"/>
</dbReference>
<comment type="function">
    <text>Releases hydrogen peroxide in the apoplast. May play an important role in several aspects of plant growth and defense mechanisms.</text>
</comment>
<comment type="catalytic activity">
    <reaction>
        <text>oxalate + O2 + 2 H(+) = H2O2 + 2 CO2</text>
        <dbReference type="Rhea" id="RHEA:21880"/>
        <dbReference type="ChEBI" id="CHEBI:15378"/>
        <dbReference type="ChEBI" id="CHEBI:15379"/>
        <dbReference type="ChEBI" id="CHEBI:16240"/>
        <dbReference type="ChEBI" id="CHEBI:16526"/>
        <dbReference type="ChEBI" id="CHEBI:30623"/>
        <dbReference type="EC" id="1.2.3.4"/>
    </reaction>
</comment>
<comment type="subunit">
    <text evidence="1">Oligomer (believed to be a pentamer but probably hexamer).</text>
</comment>
<comment type="subcellular location">
    <subcellularLocation>
        <location evidence="1">Secreted</location>
        <location evidence="1">Extracellular space</location>
        <location evidence="1">Apoplast</location>
    </subcellularLocation>
    <subcellularLocation>
        <location evidence="1">Secreted</location>
        <location evidence="1">Cell wall</location>
    </subcellularLocation>
</comment>
<comment type="tissue specificity">
    <text>Root.</text>
</comment>
<comment type="induction">
    <text>By salt stress.</text>
</comment>
<comment type="PTM">
    <text>Glycosylated. A form called G contains antennary GlcNAc residues, whereas a form called G' lacks antennary GlcNAc residues in its otherwise identical glycans.</text>
</comment>
<comment type="similarity">
    <text evidence="3">Belongs to the germin family.</text>
</comment>
<organism>
    <name type="scientific">Hordeum vulgare</name>
    <name type="common">Barley</name>
    <dbReference type="NCBI Taxonomy" id="4513"/>
    <lineage>
        <taxon>Eukaryota</taxon>
        <taxon>Viridiplantae</taxon>
        <taxon>Streptophyta</taxon>
        <taxon>Embryophyta</taxon>
        <taxon>Tracheophyta</taxon>
        <taxon>Spermatophyta</taxon>
        <taxon>Magnoliopsida</taxon>
        <taxon>Liliopsida</taxon>
        <taxon>Poales</taxon>
        <taxon>Poaceae</taxon>
        <taxon>BOP clade</taxon>
        <taxon>Pooideae</taxon>
        <taxon>Triticodae</taxon>
        <taxon>Triticeae</taxon>
        <taxon>Hordeinae</taxon>
        <taxon>Hordeum</taxon>
    </lineage>
</organism>
<evidence type="ECO:0000250" key="1"/>
<evidence type="ECO:0000255" key="2"/>
<evidence type="ECO:0000305" key="3"/>
<name>OXO2_HORVU</name>
<accession>P45851</accession>
<sequence>MGYSKTLAVSLFAVLLLAPAVLASDPDPLQDFCVADLDGKAVSVNGHPCKPMSEAGDDFLFSSKLAKAGNTSTPNGSAVTELDVAEWPGTNTLGVSMNRVDFAPGGTNPPHVHPRATEIGIVMKGELLVGILGSLDSGNKLYSRVVRAGETFLIPRGLMHFQFNVGKTEASMVVSFNSQNPGIVFVPLTLFGSNPPIPTPVLTKALRVEAGVVELLKSKFAAGF</sequence>
<proteinExistence type="evidence at transcript level"/>
<protein>
    <recommendedName>
        <fullName>Oxalate oxidase 2</fullName>
        <ecNumber>1.2.3.4</ecNumber>
    </recommendedName>
    <alternativeName>
        <fullName>Germin</fullName>
    </alternativeName>
</protein>
<feature type="signal peptide" evidence="1">
    <location>
        <begin position="1"/>
        <end position="23"/>
    </location>
</feature>
<feature type="chain" id="PRO_0000010833" description="Oxalate oxidase 2">
    <location>
        <begin position="24"/>
        <end position="224"/>
    </location>
</feature>
<feature type="domain" description="Cupin type-1" evidence="2">
    <location>
        <begin position="63"/>
        <end position="214"/>
    </location>
</feature>
<feature type="binding site" evidence="1">
    <location>
        <position position="111"/>
    </location>
    <ligand>
        <name>Mn(2+)</name>
        <dbReference type="ChEBI" id="CHEBI:29035"/>
    </ligand>
</feature>
<feature type="binding site" evidence="1">
    <location>
        <position position="113"/>
    </location>
    <ligand>
        <name>Mn(2+)</name>
        <dbReference type="ChEBI" id="CHEBI:29035"/>
    </ligand>
</feature>
<feature type="binding site" evidence="1">
    <location>
        <position position="118"/>
    </location>
    <ligand>
        <name>Mn(2+)</name>
        <dbReference type="ChEBI" id="CHEBI:29035"/>
    </ligand>
</feature>
<feature type="binding site" evidence="1">
    <location>
        <position position="160"/>
    </location>
    <ligand>
        <name>Mn(2+)</name>
        <dbReference type="ChEBI" id="CHEBI:29035"/>
    </ligand>
</feature>
<feature type="glycosylation site" description="N-linked (GlcNAc...) asparagine" evidence="2">
    <location>
        <position position="70"/>
    </location>
</feature>
<feature type="glycosylation site" description="N-linked (GlcNAc...) asparagine" evidence="2">
    <location>
        <position position="75"/>
    </location>
</feature>
<feature type="disulfide bond" evidence="1">
    <location>
        <begin position="33"/>
        <end position="49"/>
    </location>
</feature>